<dbReference type="EMBL" id="AC009918">
    <property type="protein sequence ID" value="AAF02129.1"/>
    <property type="molecule type" value="Genomic_DNA"/>
</dbReference>
<dbReference type="EMBL" id="CP002686">
    <property type="protein sequence ID" value="AEE75072.1"/>
    <property type="molecule type" value="Genomic_DNA"/>
</dbReference>
<dbReference type="EMBL" id="AK117497">
    <property type="protein sequence ID" value="BAC42160.1"/>
    <property type="molecule type" value="mRNA"/>
</dbReference>
<dbReference type="EMBL" id="BT005174">
    <property type="protein sequence ID" value="AAO50707.1"/>
    <property type="molecule type" value="mRNA"/>
</dbReference>
<dbReference type="EMBL" id="AY085790">
    <property type="protein sequence ID" value="AAM63007.1"/>
    <property type="molecule type" value="mRNA"/>
</dbReference>
<dbReference type="RefSeq" id="NP_566393.1">
    <property type="nucleotide sequence ID" value="NM_111993.3"/>
</dbReference>
<dbReference type="FunCoup" id="Q9SRN4">
    <property type="interactions" value="14"/>
</dbReference>
<dbReference type="PaxDb" id="3702-AT3G11600.1"/>
<dbReference type="EnsemblPlants" id="AT3G11600.1">
    <property type="protein sequence ID" value="AT3G11600.1"/>
    <property type="gene ID" value="AT3G11600"/>
</dbReference>
<dbReference type="GeneID" id="820333"/>
<dbReference type="Gramene" id="AT3G11600.1">
    <property type="protein sequence ID" value="AT3G11600.1"/>
    <property type="gene ID" value="AT3G11600"/>
</dbReference>
<dbReference type="KEGG" id="ath:AT3G11600"/>
<dbReference type="Araport" id="AT3G11600"/>
<dbReference type="TAIR" id="AT3G11600">
    <property type="gene designation" value="GIR2"/>
</dbReference>
<dbReference type="eggNOG" id="ENOG502S48P">
    <property type="taxonomic scope" value="Eukaryota"/>
</dbReference>
<dbReference type="HOGENOM" id="CLU_109567_2_1_1"/>
<dbReference type="InParanoid" id="Q9SRN4"/>
<dbReference type="OMA" id="MYIMLAD"/>
<dbReference type="OrthoDB" id="1930194at2759"/>
<dbReference type="PhylomeDB" id="Q9SRN4"/>
<dbReference type="PRO" id="PR:Q9SRN4"/>
<dbReference type="Proteomes" id="UP000006548">
    <property type="component" value="Chromosome 3"/>
</dbReference>
<dbReference type="ExpressionAtlas" id="Q9SRN4">
    <property type="expression patterns" value="baseline and differential"/>
</dbReference>
<dbReference type="GO" id="GO:0005634">
    <property type="term" value="C:nucleus"/>
    <property type="evidence" value="ECO:0007669"/>
    <property type="project" value="UniProtKB-SubCell"/>
</dbReference>
<dbReference type="GO" id="GO:0080147">
    <property type="term" value="P:root hair cell development"/>
    <property type="evidence" value="ECO:0000316"/>
    <property type="project" value="TAIR"/>
</dbReference>
<dbReference type="InterPro" id="IPR055281">
    <property type="entry name" value="GIR1-2/SIED1"/>
</dbReference>
<dbReference type="InterPro" id="IPR056440">
    <property type="entry name" value="Zn-ribbon_GIR1"/>
</dbReference>
<dbReference type="PANTHER" id="PTHR33177:SF76">
    <property type="entry name" value="PROTEIN GL2-INTERACTING REPRESSOR 2"/>
    <property type="match status" value="1"/>
</dbReference>
<dbReference type="PANTHER" id="PTHR33177">
    <property type="entry name" value="PUTATIVE-RELATED"/>
    <property type="match status" value="1"/>
</dbReference>
<dbReference type="Pfam" id="PF24747">
    <property type="entry name" value="Zn-ribbon_GIR1"/>
    <property type="match status" value="1"/>
</dbReference>
<gene>
    <name evidence="4" type="primary">GIR2</name>
    <name evidence="6" type="ordered locus">At3g11600</name>
    <name evidence="7" type="ORF">T19F11.1</name>
</gene>
<accession>Q9SRN4</accession>
<accession>A0A178VFZ0</accession>
<protein>
    <recommendedName>
        <fullName evidence="4">Protein GL2-INTERACTING REPRESSOR 2</fullName>
    </recommendedName>
</protein>
<proteinExistence type="evidence at protein level"/>
<reference key="1">
    <citation type="journal article" date="2000" name="Nature">
        <title>Sequence and analysis of chromosome 3 of the plant Arabidopsis thaliana.</title>
        <authorList>
            <person name="Salanoubat M."/>
            <person name="Lemcke K."/>
            <person name="Rieger M."/>
            <person name="Ansorge W."/>
            <person name="Unseld M."/>
            <person name="Fartmann B."/>
            <person name="Valle G."/>
            <person name="Bloecker H."/>
            <person name="Perez-Alonso M."/>
            <person name="Obermaier B."/>
            <person name="Delseny M."/>
            <person name="Boutry M."/>
            <person name="Grivell L.A."/>
            <person name="Mache R."/>
            <person name="Puigdomenech P."/>
            <person name="De Simone V."/>
            <person name="Choisne N."/>
            <person name="Artiguenave F."/>
            <person name="Robert C."/>
            <person name="Brottier P."/>
            <person name="Wincker P."/>
            <person name="Cattolico L."/>
            <person name="Weissenbach J."/>
            <person name="Saurin W."/>
            <person name="Quetier F."/>
            <person name="Schaefer M."/>
            <person name="Mueller-Auer S."/>
            <person name="Gabel C."/>
            <person name="Fuchs M."/>
            <person name="Benes V."/>
            <person name="Wurmbach E."/>
            <person name="Drzonek H."/>
            <person name="Erfle H."/>
            <person name="Jordan N."/>
            <person name="Bangert S."/>
            <person name="Wiedelmann R."/>
            <person name="Kranz H."/>
            <person name="Voss H."/>
            <person name="Holland R."/>
            <person name="Brandt P."/>
            <person name="Nyakatura G."/>
            <person name="Vezzi A."/>
            <person name="D'Angelo M."/>
            <person name="Pallavicini A."/>
            <person name="Toppo S."/>
            <person name="Simionati B."/>
            <person name="Conrad A."/>
            <person name="Hornischer K."/>
            <person name="Kauer G."/>
            <person name="Loehnert T.-H."/>
            <person name="Nordsiek G."/>
            <person name="Reichelt J."/>
            <person name="Scharfe M."/>
            <person name="Schoen O."/>
            <person name="Bargues M."/>
            <person name="Terol J."/>
            <person name="Climent J."/>
            <person name="Navarro P."/>
            <person name="Collado C."/>
            <person name="Perez-Perez A."/>
            <person name="Ottenwaelder B."/>
            <person name="Duchemin D."/>
            <person name="Cooke R."/>
            <person name="Laudie M."/>
            <person name="Berger-Llauro C."/>
            <person name="Purnelle B."/>
            <person name="Masuy D."/>
            <person name="de Haan M."/>
            <person name="Maarse A.C."/>
            <person name="Alcaraz J.-P."/>
            <person name="Cottet A."/>
            <person name="Casacuberta E."/>
            <person name="Monfort A."/>
            <person name="Argiriou A."/>
            <person name="Flores M."/>
            <person name="Liguori R."/>
            <person name="Vitale D."/>
            <person name="Mannhaupt G."/>
            <person name="Haase D."/>
            <person name="Schoof H."/>
            <person name="Rudd S."/>
            <person name="Zaccaria P."/>
            <person name="Mewes H.-W."/>
            <person name="Mayer K.F.X."/>
            <person name="Kaul S."/>
            <person name="Town C.D."/>
            <person name="Koo H.L."/>
            <person name="Tallon L.J."/>
            <person name="Jenkins J."/>
            <person name="Rooney T."/>
            <person name="Rizzo M."/>
            <person name="Walts A."/>
            <person name="Utterback T."/>
            <person name="Fujii C.Y."/>
            <person name="Shea T.P."/>
            <person name="Creasy T.H."/>
            <person name="Haas B."/>
            <person name="Maiti R."/>
            <person name="Wu D."/>
            <person name="Peterson J."/>
            <person name="Van Aken S."/>
            <person name="Pai G."/>
            <person name="Militscher J."/>
            <person name="Sellers P."/>
            <person name="Gill J.E."/>
            <person name="Feldblyum T.V."/>
            <person name="Preuss D."/>
            <person name="Lin X."/>
            <person name="Nierman W.C."/>
            <person name="Salzberg S.L."/>
            <person name="White O."/>
            <person name="Venter J.C."/>
            <person name="Fraser C.M."/>
            <person name="Kaneko T."/>
            <person name="Nakamura Y."/>
            <person name="Sato S."/>
            <person name="Kato T."/>
            <person name="Asamizu E."/>
            <person name="Sasamoto S."/>
            <person name="Kimura T."/>
            <person name="Idesawa K."/>
            <person name="Kawashima K."/>
            <person name="Kishida Y."/>
            <person name="Kiyokawa C."/>
            <person name="Kohara M."/>
            <person name="Matsumoto M."/>
            <person name="Matsuno A."/>
            <person name="Muraki A."/>
            <person name="Nakayama S."/>
            <person name="Nakazaki N."/>
            <person name="Shinpo S."/>
            <person name="Takeuchi C."/>
            <person name="Wada T."/>
            <person name="Watanabe A."/>
            <person name="Yamada M."/>
            <person name="Yasuda M."/>
            <person name="Tabata S."/>
        </authorList>
    </citation>
    <scope>NUCLEOTIDE SEQUENCE [LARGE SCALE GENOMIC DNA]</scope>
    <source>
        <strain>cv. Columbia</strain>
    </source>
</reference>
<reference key="2">
    <citation type="journal article" date="2017" name="Plant J.">
        <title>Araport11: a complete reannotation of the Arabidopsis thaliana reference genome.</title>
        <authorList>
            <person name="Cheng C.Y."/>
            <person name="Krishnakumar V."/>
            <person name="Chan A.P."/>
            <person name="Thibaud-Nissen F."/>
            <person name="Schobel S."/>
            <person name="Town C.D."/>
        </authorList>
    </citation>
    <scope>GENOME REANNOTATION</scope>
    <source>
        <strain>cv. Columbia</strain>
    </source>
</reference>
<reference key="3">
    <citation type="journal article" date="2002" name="Science">
        <title>Functional annotation of a full-length Arabidopsis cDNA collection.</title>
        <authorList>
            <person name="Seki M."/>
            <person name="Narusaka M."/>
            <person name="Kamiya A."/>
            <person name="Ishida J."/>
            <person name="Satou M."/>
            <person name="Sakurai T."/>
            <person name="Nakajima M."/>
            <person name="Enju A."/>
            <person name="Akiyama K."/>
            <person name="Oono Y."/>
            <person name="Muramatsu M."/>
            <person name="Hayashizaki Y."/>
            <person name="Kawai J."/>
            <person name="Carninci P."/>
            <person name="Itoh M."/>
            <person name="Ishii Y."/>
            <person name="Arakawa T."/>
            <person name="Shibata K."/>
            <person name="Shinagawa A."/>
            <person name="Shinozaki K."/>
        </authorList>
    </citation>
    <scope>NUCLEOTIDE SEQUENCE [LARGE SCALE MRNA]</scope>
    <source>
        <strain>cv. Columbia</strain>
    </source>
</reference>
<reference key="4">
    <citation type="journal article" date="2003" name="Science">
        <title>Empirical analysis of transcriptional activity in the Arabidopsis genome.</title>
        <authorList>
            <person name="Yamada K."/>
            <person name="Lim J."/>
            <person name="Dale J.M."/>
            <person name="Chen H."/>
            <person name="Shinn P."/>
            <person name="Palm C.J."/>
            <person name="Southwick A.M."/>
            <person name="Wu H.C."/>
            <person name="Kim C.J."/>
            <person name="Nguyen M."/>
            <person name="Pham P.K."/>
            <person name="Cheuk R.F."/>
            <person name="Karlin-Newmann G."/>
            <person name="Liu S.X."/>
            <person name="Lam B."/>
            <person name="Sakano H."/>
            <person name="Wu T."/>
            <person name="Yu G."/>
            <person name="Miranda M."/>
            <person name="Quach H.L."/>
            <person name="Tripp M."/>
            <person name="Chang C.H."/>
            <person name="Lee J.M."/>
            <person name="Toriumi M.J."/>
            <person name="Chan M.M."/>
            <person name="Tang C.C."/>
            <person name="Onodera C.S."/>
            <person name="Deng J.M."/>
            <person name="Akiyama K."/>
            <person name="Ansari Y."/>
            <person name="Arakawa T."/>
            <person name="Banh J."/>
            <person name="Banno F."/>
            <person name="Bowser L."/>
            <person name="Brooks S.Y."/>
            <person name="Carninci P."/>
            <person name="Chao Q."/>
            <person name="Choy N."/>
            <person name="Enju A."/>
            <person name="Goldsmith A.D."/>
            <person name="Gurjal M."/>
            <person name="Hansen N.F."/>
            <person name="Hayashizaki Y."/>
            <person name="Johnson-Hopson C."/>
            <person name="Hsuan V.W."/>
            <person name="Iida K."/>
            <person name="Karnes M."/>
            <person name="Khan S."/>
            <person name="Koesema E."/>
            <person name="Ishida J."/>
            <person name="Jiang P.X."/>
            <person name="Jones T."/>
            <person name="Kawai J."/>
            <person name="Kamiya A."/>
            <person name="Meyers C."/>
            <person name="Nakajima M."/>
            <person name="Narusaka M."/>
            <person name="Seki M."/>
            <person name="Sakurai T."/>
            <person name="Satou M."/>
            <person name="Tamse R."/>
            <person name="Vaysberg M."/>
            <person name="Wallender E.K."/>
            <person name="Wong C."/>
            <person name="Yamamura Y."/>
            <person name="Yuan S."/>
            <person name="Shinozaki K."/>
            <person name="Davis R.W."/>
            <person name="Theologis A."/>
            <person name="Ecker J.R."/>
        </authorList>
    </citation>
    <scope>NUCLEOTIDE SEQUENCE [LARGE SCALE MRNA]</scope>
    <source>
        <strain>cv. Columbia</strain>
    </source>
</reference>
<reference key="5">
    <citation type="submission" date="2002-03" db="EMBL/GenBank/DDBJ databases">
        <title>Full-length cDNA from Arabidopsis thaliana.</title>
        <authorList>
            <person name="Brover V.V."/>
            <person name="Troukhan M.E."/>
            <person name="Alexandrov N.A."/>
            <person name="Lu Y.-P."/>
            <person name="Flavell R.B."/>
            <person name="Feldmann K.A."/>
        </authorList>
    </citation>
    <scope>NUCLEOTIDE SEQUENCE [LARGE SCALE MRNA]</scope>
</reference>
<reference key="6">
    <citation type="journal article" date="2017" name="Biochem. Biophys. Res. Commun.">
        <title>Adaptor proteins GIR1 and GIR2. I. Interaction with the repressor GLABRA2 and regulation of root hair development.</title>
        <authorList>
            <person name="Wu R."/>
            <person name="Citovsky V."/>
        </authorList>
    </citation>
    <scope>FUNCTION</scope>
    <scope>INTERACTION WITH GL2</scope>
    <scope>SUBCELLULAR LOCATION</scope>
    <scope>DISRUPTION PHENOTYPE</scope>
</reference>
<reference key="7">
    <citation type="journal article" date="2017" name="Biochem. Biophys. Res. Commun.">
        <title>Adaptor proteins GIR1 and GIR2. II. Interaction with the co-repressor TOPLESS and promotion of histone deacetylation of target chromatin.</title>
        <authorList>
            <person name="Wu R."/>
            <person name="Citovsky V."/>
        </authorList>
    </citation>
    <scope>FUNCTION</scope>
    <scope>INTERACTION WITH TPL</scope>
    <scope>SUBCELLULAR LOCATION</scope>
    <scope>EAR MOTIF</scope>
</reference>
<sequence length="117" mass="13040">MSRRNKNGPKLELRLNLSPPPSQASQMSLVRSPNRSNTTSPSSCVSSETNQEENETITSMVLVGCPRCLMYVMLSDDDPKCPKCKSTVLLDFLQENAFAATTATAANTRRKKKTWWN</sequence>
<name>GIR2_ARATH</name>
<organism>
    <name type="scientific">Arabidopsis thaliana</name>
    <name type="common">Mouse-ear cress</name>
    <dbReference type="NCBI Taxonomy" id="3702"/>
    <lineage>
        <taxon>Eukaryota</taxon>
        <taxon>Viridiplantae</taxon>
        <taxon>Streptophyta</taxon>
        <taxon>Embryophyta</taxon>
        <taxon>Tracheophyta</taxon>
        <taxon>Spermatophyta</taxon>
        <taxon>Magnoliopsida</taxon>
        <taxon>eudicotyledons</taxon>
        <taxon>Gunneridae</taxon>
        <taxon>Pentapetalae</taxon>
        <taxon>rosids</taxon>
        <taxon>malvids</taxon>
        <taxon>Brassicales</taxon>
        <taxon>Brassicaceae</taxon>
        <taxon>Camelineae</taxon>
        <taxon>Arabidopsis</taxon>
    </lineage>
</organism>
<evidence type="ECO:0000256" key="1">
    <source>
        <dbReference type="SAM" id="MobiDB-lite"/>
    </source>
</evidence>
<evidence type="ECO:0000269" key="2">
    <source>
    </source>
</evidence>
<evidence type="ECO:0000269" key="3">
    <source>
    </source>
</evidence>
<evidence type="ECO:0000303" key="4">
    <source>
    </source>
</evidence>
<evidence type="ECO:0000305" key="5">
    <source>
    </source>
</evidence>
<evidence type="ECO:0000312" key="6">
    <source>
        <dbReference type="Araport" id="AT3G11600"/>
    </source>
</evidence>
<evidence type="ECO:0000312" key="7">
    <source>
        <dbReference type="EMBL" id="AAF02129.1"/>
    </source>
</evidence>
<keyword id="KW-0539">Nucleus</keyword>
<keyword id="KW-1185">Reference proteome</keyword>
<keyword id="KW-0678">Repressor</keyword>
<keyword id="KW-0804">Transcription</keyword>
<keyword id="KW-0805">Transcription regulation</keyword>
<feature type="chain" id="PRO_0000450105" description="Protein GL2-INTERACTING REPRESSOR 2">
    <location>
        <begin position="1"/>
        <end position="117"/>
    </location>
</feature>
<feature type="region of interest" description="Disordered" evidence="1">
    <location>
        <begin position="1"/>
        <end position="56"/>
    </location>
</feature>
<feature type="short sequence motif" description="EAR" evidence="5">
    <location>
        <begin position="10"/>
        <end position="15"/>
    </location>
</feature>
<feature type="compositionally biased region" description="Low complexity" evidence="1">
    <location>
        <begin position="31"/>
        <end position="49"/>
    </location>
</feature>
<comment type="function">
    <text evidence="2 3">Acts as a negative regulator of root hair development redundantly with GIR1 (PubMed:28526410). GIR1 and GIR2 may function as adapter proteins that associate with GL2 and participate in the control of root hair formation (PubMed:28526410). GIR1 and GIR2 may function as adapter proteins that associate with TPL and participate in the repression of root gene expression (PubMed:28526412).</text>
</comment>
<comment type="subunit">
    <text evidence="2 3">Interacts with GL2 (PubMed:28526410). Interacts with TPL (PubMed:28526412).</text>
</comment>
<comment type="subcellular location">
    <subcellularLocation>
        <location evidence="2 3">Nucleus</location>
    </subcellularLocation>
</comment>
<comment type="disruption phenotype">
    <text evidence="2">No visible phenotype under normal growth conditions, but the double mutant seedlings gir1 and gir2 exhibit excessive root hair formation.</text>
</comment>